<organism>
    <name type="scientific">Helicobacter pylori (strain G27)</name>
    <dbReference type="NCBI Taxonomy" id="563041"/>
    <lineage>
        <taxon>Bacteria</taxon>
        <taxon>Pseudomonadati</taxon>
        <taxon>Campylobacterota</taxon>
        <taxon>Epsilonproteobacteria</taxon>
        <taxon>Campylobacterales</taxon>
        <taxon>Helicobacteraceae</taxon>
        <taxon>Helicobacter</taxon>
    </lineage>
</organism>
<dbReference type="EC" id="6.1.1.5" evidence="1"/>
<dbReference type="EMBL" id="CP001173">
    <property type="protein sequence ID" value="ACI28092.1"/>
    <property type="molecule type" value="Genomic_DNA"/>
</dbReference>
<dbReference type="RefSeq" id="WP_000666277.1">
    <property type="nucleotide sequence ID" value="NC_011333.1"/>
</dbReference>
<dbReference type="SMR" id="B5Z943"/>
<dbReference type="KEGG" id="hpg:HPG27_1345"/>
<dbReference type="HOGENOM" id="CLU_001493_7_0_7"/>
<dbReference type="Proteomes" id="UP000001735">
    <property type="component" value="Chromosome"/>
</dbReference>
<dbReference type="GO" id="GO:0005829">
    <property type="term" value="C:cytosol"/>
    <property type="evidence" value="ECO:0007669"/>
    <property type="project" value="TreeGrafter"/>
</dbReference>
<dbReference type="GO" id="GO:0002161">
    <property type="term" value="F:aminoacyl-tRNA deacylase activity"/>
    <property type="evidence" value="ECO:0007669"/>
    <property type="project" value="InterPro"/>
</dbReference>
<dbReference type="GO" id="GO:0005524">
    <property type="term" value="F:ATP binding"/>
    <property type="evidence" value="ECO:0007669"/>
    <property type="project" value="UniProtKB-UniRule"/>
</dbReference>
<dbReference type="GO" id="GO:0004822">
    <property type="term" value="F:isoleucine-tRNA ligase activity"/>
    <property type="evidence" value="ECO:0007669"/>
    <property type="project" value="UniProtKB-UniRule"/>
</dbReference>
<dbReference type="GO" id="GO:0000049">
    <property type="term" value="F:tRNA binding"/>
    <property type="evidence" value="ECO:0007669"/>
    <property type="project" value="InterPro"/>
</dbReference>
<dbReference type="GO" id="GO:0008270">
    <property type="term" value="F:zinc ion binding"/>
    <property type="evidence" value="ECO:0007669"/>
    <property type="project" value="UniProtKB-UniRule"/>
</dbReference>
<dbReference type="GO" id="GO:0006428">
    <property type="term" value="P:isoleucyl-tRNA aminoacylation"/>
    <property type="evidence" value="ECO:0007669"/>
    <property type="project" value="UniProtKB-UniRule"/>
</dbReference>
<dbReference type="CDD" id="cd07960">
    <property type="entry name" value="Anticodon_Ia_Ile_BEm"/>
    <property type="match status" value="1"/>
</dbReference>
<dbReference type="CDD" id="cd00818">
    <property type="entry name" value="IleRS_core"/>
    <property type="match status" value="1"/>
</dbReference>
<dbReference type="FunFam" id="3.40.50.620:FF:000168">
    <property type="entry name" value="Isoleucine--tRNA ligase"/>
    <property type="match status" value="1"/>
</dbReference>
<dbReference type="Gene3D" id="1.10.730.20">
    <property type="match status" value="1"/>
</dbReference>
<dbReference type="Gene3D" id="3.40.50.620">
    <property type="entry name" value="HUPs"/>
    <property type="match status" value="2"/>
</dbReference>
<dbReference type="Gene3D" id="1.10.10.830">
    <property type="entry name" value="Ile-tRNA synthetase CP2 domain-like"/>
    <property type="match status" value="1"/>
</dbReference>
<dbReference type="HAMAP" id="MF_02002">
    <property type="entry name" value="Ile_tRNA_synth_type1"/>
    <property type="match status" value="1"/>
</dbReference>
<dbReference type="InterPro" id="IPR001412">
    <property type="entry name" value="aa-tRNA-synth_I_CS"/>
</dbReference>
<dbReference type="InterPro" id="IPR002300">
    <property type="entry name" value="aa-tRNA-synth_Ia"/>
</dbReference>
<dbReference type="InterPro" id="IPR033708">
    <property type="entry name" value="Anticodon_Ile_BEm"/>
</dbReference>
<dbReference type="InterPro" id="IPR002301">
    <property type="entry name" value="Ile-tRNA-ligase"/>
</dbReference>
<dbReference type="InterPro" id="IPR023585">
    <property type="entry name" value="Ile-tRNA-ligase_type1"/>
</dbReference>
<dbReference type="InterPro" id="IPR050081">
    <property type="entry name" value="Ile-tRNA_ligase"/>
</dbReference>
<dbReference type="InterPro" id="IPR013155">
    <property type="entry name" value="M/V/L/I-tRNA-synth_anticd-bd"/>
</dbReference>
<dbReference type="InterPro" id="IPR014729">
    <property type="entry name" value="Rossmann-like_a/b/a_fold"/>
</dbReference>
<dbReference type="InterPro" id="IPR009080">
    <property type="entry name" value="tRNAsynth_Ia_anticodon-bd"/>
</dbReference>
<dbReference type="InterPro" id="IPR009008">
    <property type="entry name" value="Val/Leu/Ile-tRNA-synth_edit"/>
</dbReference>
<dbReference type="NCBIfam" id="TIGR00392">
    <property type="entry name" value="ileS"/>
    <property type="match status" value="1"/>
</dbReference>
<dbReference type="PANTHER" id="PTHR42765:SF1">
    <property type="entry name" value="ISOLEUCINE--TRNA LIGASE, MITOCHONDRIAL"/>
    <property type="match status" value="1"/>
</dbReference>
<dbReference type="PANTHER" id="PTHR42765">
    <property type="entry name" value="SOLEUCYL-TRNA SYNTHETASE"/>
    <property type="match status" value="1"/>
</dbReference>
<dbReference type="Pfam" id="PF08264">
    <property type="entry name" value="Anticodon_1"/>
    <property type="match status" value="1"/>
</dbReference>
<dbReference type="Pfam" id="PF00133">
    <property type="entry name" value="tRNA-synt_1"/>
    <property type="match status" value="1"/>
</dbReference>
<dbReference type="PRINTS" id="PR00984">
    <property type="entry name" value="TRNASYNTHILE"/>
</dbReference>
<dbReference type="SUPFAM" id="SSF47323">
    <property type="entry name" value="Anticodon-binding domain of a subclass of class I aminoacyl-tRNA synthetases"/>
    <property type="match status" value="1"/>
</dbReference>
<dbReference type="SUPFAM" id="SSF52374">
    <property type="entry name" value="Nucleotidylyl transferase"/>
    <property type="match status" value="1"/>
</dbReference>
<dbReference type="SUPFAM" id="SSF50677">
    <property type="entry name" value="ValRS/IleRS/LeuRS editing domain"/>
    <property type="match status" value="1"/>
</dbReference>
<dbReference type="PROSITE" id="PS00178">
    <property type="entry name" value="AA_TRNA_LIGASE_I"/>
    <property type="match status" value="1"/>
</dbReference>
<sequence>MKEYKDTLNLNTTTFSMKGNLSVNEPKTYAKWQEQQAFKRMQNRKDNHGDFTLHDGPPYANGHLHLGHALNKILKDIVIKREYFKGNKIYYTPGWDCHGLPIEQQILERLEKEKTSLENPTLFREKCRDHAKKFLEIQKNEFLQLGVLGDFEDPYKTMDFKFEASIYRALVEVAKKGLLKERHKPIYWSYACESALAEAEVEYKMKKSPSIFVAFGLKKESLEKLKVKKASLVIWTTTPWTLYANVAIALKKDALYALTQKGYLVAKVLHEKLAALGVVDSEIAHEFNANDLEYLKATNPLNQRDSLITLGEHVGLEDGTGAVHTAPGHGEEDYYLGLKYNLEVLMSVDEKGCYNEGIIHKKLLDESYLGEHVFKAQKRIIEQLGDSLLLEQEIEHSYPHCWRTHKPVIYRATTQWFILMDEPFIQNDGSQKTLREVALNAIEKVEFVPSSGKNRLKTMIENRPDWCLSRQRKWGVPLAFFIDKRTNKPCFESEVLEHVANLFEKKGCDVWWESSVKDLLPPSYQEDSKHYEKVMHILDVWFDSGSTFKAVLEDYYGEKGQSPSDVILEGSDQHRGWFQSSLLIGCVLNNQAPFKKVITHGFIVDEKGEKMSKSKGNVVSLDNLLKKHGSDVVRLWVAFNDYQNDLRVSQTFFIQTEQHYKKFRNTLKFLLANFSDMDLKDLERSHNFSPLDHFILETLETTSTGVNSAFEEHDFVKGLNILMAFVTNELSGIYLDACKDSLYCDSKNNKKRQAIQMVLLAVASQLCYFLAPILTHTIEEVLEHSQVLCAFLQAKDVFDLKGINILEKLRLKEFKKPENFEAVLALRSAFNEELDRLKKEGVIKNSLECAIEVKEKALRENLVEELLMVSFVGVAKEKISETPAFTLFKAPFYKCPRCWRFKSELENTPCKRCEEVLKER</sequence>
<feature type="chain" id="PRO_1000189171" description="Isoleucine--tRNA ligase">
    <location>
        <begin position="1"/>
        <end position="920"/>
    </location>
</feature>
<feature type="short sequence motif" description="'HIGH' region">
    <location>
        <begin position="58"/>
        <end position="68"/>
    </location>
</feature>
<feature type="short sequence motif" description="'KMSKS' region">
    <location>
        <begin position="610"/>
        <end position="614"/>
    </location>
</feature>
<feature type="binding site" evidence="1">
    <location>
        <position position="569"/>
    </location>
    <ligand>
        <name>L-isoleucyl-5'-AMP</name>
        <dbReference type="ChEBI" id="CHEBI:178002"/>
    </ligand>
</feature>
<feature type="binding site" evidence="1">
    <location>
        <position position="613"/>
    </location>
    <ligand>
        <name>ATP</name>
        <dbReference type="ChEBI" id="CHEBI:30616"/>
    </ligand>
</feature>
<feature type="binding site" evidence="1">
    <location>
        <position position="895"/>
    </location>
    <ligand>
        <name>Zn(2+)</name>
        <dbReference type="ChEBI" id="CHEBI:29105"/>
    </ligand>
</feature>
<feature type="binding site" evidence="1">
    <location>
        <position position="898"/>
    </location>
    <ligand>
        <name>Zn(2+)</name>
        <dbReference type="ChEBI" id="CHEBI:29105"/>
    </ligand>
</feature>
<feature type="binding site" evidence="1">
    <location>
        <position position="910"/>
    </location>
    <ligand>
        <name>Zn(2+)</name>
        <dbReference type="ChEBI" id="CHEBI:29105"/>
    </ligand>
</feature>
<feature type="binding site" evidence="1">
    <location>
        <position position="913"/>
    </location>
    <ligand>
        <name>Zn(2+)</name>
        <dbReference type="ChEBI" id="CHEBI:29105"/>
    </ligand>
</feature>
<accession>B5Z943</accession>
<gene>
    <name evidence="1" type="primary">ileS</name>
    <name type="ordered locus">HPG27_1345</name>
</gene>
<comment type="function">
    <text evidence="1">Catalyzes the attachment of isoleucine to tRNA(Ile). As IleRS can inadvertently accommodate and process structurally similar amino acids such as valine, to avoid such errors it has two additional distinct tRNA(Ile)-dependent editing activities. One activity is designated as 'pretransfer' editing and involves the hydrolysis of activated Val-AMP. The other activity is designated 'posttransfer' editing and involves deacylation of mischarged Val-tRNA(Ile).</text>
</comment>
<comment type="catalytic activity">
    <reaction evidence="1">
        <text>tRNA(Ile) + L-isoleucine + ATP = L-isoleucyl-tRNA(Ile) + AMP + diphosphate</text>
        <dbReference type="Rhea" id="RHEA:11060"/>
        <dbReference type="Rhea" id="RHEA-COMP:9666"/>
        <dbReference type="Rhea" id="RHEA-COMP:9695"/>
        <dbReference type="ChEBI" id="CHEBI:30616"/>
        <dbReference type="ChEBI" id="CHEBI:33019"/>
        <dbReference type="ChEBI" id="CHEBI:58045"/>
        <dbReference type="ChEBI" id="CHEBI:78442"/>
        <dbReference type="ChEBI" id="CHEBI:78528"/>
        <dbReference type="ChEBI" id="CHEBI:456215"/>
        <dbReference type="EC" id="6.1.1.5"/>
    </reaction>
</comment>
<comment type="cofactor">
    <cofactor evidence="1">
        <name>Zn(2+)</name>
        <dbReference type="ChEBI" id="CHEBI:29105"/>
    </cofactor>
    <text evidence="1">Binds 1 zinc ion per subunit.</text>
</comment>
<comment type="subunit">
    <text evidence="1">Monomer.</text>
</comment>
<comment type="subcellular location">
    <subcellularLocation>
        <location evidence="1">Cytoplasm</location>
    </subcellularLocation>
</comment>
<comment type="domain">
    <text evidence="1">IleRS has two distinct active sites: one for aminoacylation and one for editing. The misactivated valine is translocated from the active site to the editing site, which sterically excludes the correctly activated isoleucine. The single editing site contains two valyl binding pockets, one specific for each substrate (Val-AMP or Val-tRNA(Ile)).</text>
</comment>
<comment type="similarity">
    <text evidence="1">Belongs to the class-I aminoacyl-tRNA synthetase family. IleS type 1 subfamily.</text>
</comment>
<name>SYI_HELPG</name>
<evidence type="ECO:0000255" key="1">
    <source>
        <dbReference type="HAMAP-Rule" id="MF_02002"/>
    </source>
</evidence>
<reference key="1">
    <citation type="journal article" date="2009" name="J. Bacteriol.">
        <title>The complete genome sequence of Helicobacter pylori strain G27.</title>
        <authorList>
            <person name="Baltrus D.A."/>
            <person name="Amieva M.R."/>
            <person name="Covacci A."/>
            <person name="Lowe T.M."/>
            <person name="Merrell D.S."/>
            <person name="Ottemann K.M."/>
            <person name="Stein M."/>
            <person name="Salama N.R."/>
            <person name="Guillemin K."/>
        </authorList>
    </citation>
    <scope>NUCLEOTIDE SEQUENCE [LARGE SCALE GENOMIC DNA]</scope>
    <source>
        <strain>G27</strain>
    </source>
</reference>
<keyword id="KW-0030">Aminoacyl-tRNA synthetase</keyword>
<keyword id="KW-0067">ATP-binding</keyword>
<keyword id="KW-0963">Cytoplasm</keyword>
<keyword id="KW-0436">Ligase</keyword>
<keyword id="KW-0479">Metal-binding</keyword>
<keyword id="KW-0547">Nucleotide-binding</keyword>
<keyword id="KW-0648">Protein biosynthesis</keyword>
<keyword id="KW-1185">Reference proteome</keyword>
<keyword id="KW-0862">Zinc</keyword>
<protein>
    <recommendedName>
        <fullName evidence="1">Isoleucine--tRNA ligase</fullName>
        <ecNumber evidence="1">6.1.1.5</ecNumber>
    </recommendedName>
    <alternativeName>
        <fullName evidence="1">Isoleucyl-tRNA synthetase</fullName>
        <shortName evidence="1">IleRS</shortName>
    </alternativeName>
</protein>
<proteinExistence type="inferred from homology"/>